<name>RL17_ERWT9</name>
<comment type="subunit">
    <text evidence="1">Part of the 50S ribosomal subunit. Contacts protein L32.</text>
</comment>
<comment type="similarity">
    <text evidence="1">Belongs to the bacterial ribosomal protein bL17 family.</text>
</comment>
<keyword id="KW-1185">Reference proteome</keyword>
<keyword id="KW-0687">Ribonucleoprotein</keyword>
<keyword id="KW-0689">Ribosomal protein</keyword>
<proteinExistence type="inferred from homology"/>
<protein>
    <recommendedName>
        <fullName evidence="1">Large ribosomal subunit protein bL17</fullName>
    </recommendedName>
    <alternativeName>
        <fullName evidence="2">50S ribosomal protein L17</fullName>
    </alternativeName>
</protein>
<organism>
    <name type="scientific">Erwinia tasmaniensis (strain DSM 17950 / CFBP 7177 / CIP 109463 / NCPPB 4357 / Et1/99)</name>
    <dbReference type="NCBI Taxonomy" id="465817"/>
    <lineage>
        <taxon>Bacteria</taxon>
        <taxon>Pseudomonadati</taxon>
        <taxon>Pseudomonadota</taxon>
        <taxon>Gammaproteobacteria</taxon>
        <taxon>Enterobacterales</taxon>
        <taxon>Erwiniaceae</taxon>
        <taxon>Erwinia</taxon>
    </lineage>
</organism>
<feature type="chain" id="PRO_1000144425" description="Large ribosomal subunit protein bL17">
    <location>
        <begin position="1"/>
        <end position="128"/>
    </location>
</feature>
<evidence type="ECO:0000255" key="1">
    <source>
        <dbReference type="HAMAP-Rule" id="MF_01368"/>
    </source>
</evidence>
<evidence type="ECO:0000305" key="2"/>
<reference key="1">
    <citation type="journal article" date="2008" name="Environ. Microbiol.">
        <title>The genome of Erwinia tasmaniensis strain Et1/99, a non-pathogenic bacterium in the genus Erwinia.</title>
        <authorList>
            <person name="Kube M."/>
            <person name="Migdoll A.M."/>
            <person name="Mueller I."/>
            <person name="Kuhl H."/>
            <person name="Beck A."/>
            <person name="Reinhardt R."/>
            <person name="Geider K."/>
        </authorList>
    </citation>
    <scope>NUCLEOTIDE SEQUENCE [LARGE SCALE GENOMIC DNA]</scope>
    <source>
        <strain>DSM 17950 / CFBP 7177 / CIP 109463 / NCPPB 4357 / Et1/99</strain>
    </source>
</reference>
<dbReference type="EMBL" id="CU468135">
    <property type="protein sequence ID" value="CAO98183.1"/>
    <property type="molecule type" value="Genomic_DNA"/>
</dbReference>
<dbReference type="RefSeq" id="WP_004160560.1">
    <property type="nucleotide sequence ID" value="NC_010694.1"/>
</dbReference>
<dbReference type="SMR" id="B2VK70"/>
<dbReference type="STRING" id="465817.ETA_31370"/>
<dbReference type="GeneID" id="97604590"/>
<dbReference type="KEGG" id="eta:ETA_31370"/>
<dbReference type="eggNOG" id="COG0203">
    <property type="taxonomic scope" value="Bacteria"/>
</dbReference>
<dbReference type="HOGENOM" id="CLU_074407_2_0_6"/>
<dbReference type="OrthoDB" id="9809073at2"/>
<dbReference type="Proteomes" id="UP000001726">
    <property type="component" value="Chromosome"/>
</dbReference>
<dbReference type="GO" id="GO:0022625">
    <property type="term" value="C:cytosolic large ribosomal subunit"/>
    <property type="evidence" value="ECO:0007669"/>
    <property type="project" value="TreeGrafter"/>
</dbReference>
<dbReference type="GO" id="GO:0003735">
    <property type="term" value="F:structural constituent of ribosome"/>
    <property type="evidence" value="ECO:0007669"/>
    <property type="project" value="InterPro"/>
</dbReference>
<dbReference type="GO" id="GO:0006412">
    <property type="term" value="P:translation"/>
    <property type="evidence" value="ECO:0007669"/>
    <property type="project" value="UniProtKB-UniRule"/>
</dbReference>
<dbReference type="FunFam" id="3.90.1030.10:FF:000001">
    <property type="entry name" value="50S ribosomal protein L17"/>
    <property type="match status" value="1"/>
</dbReference>
<dbReference type="Gene3D" id="3.90.1030.10">
    <property type="entry name" value="Ribosomal protein L17"/>
    <property type="match status" value="1"/>
</dbReference>
<dbReference type="HAMAP" id="MF_01368">
    <property type="entry name" value="Ribosomal_bL17"/>
    <property type="match status" value="1"/>
</dbReference>
<dbReference type="InterPro" id="IPR000456">
    <property type="entry name" value="Ribosomal_bL17"/>
</dbReference>
<dbReference type="InterPro" id="IPR047859">
    <property type="entry name" value="Ribosomal_bL17_CS"/>
</dbReference>
<dbReference type="InterPro" id="IPR036373">
    <property type="entry name" value="Ribosomal_bL17_sf"/>
</dbReference>
<dbReference type="NCBIfam" id="TIGR00059">
    <property type="entry name" value="L17"/>
    <property type="match status" value="1"/>
</dbReference>
<dbReference type="PANTHER" id="PTHR14413:SF16">
    <property type="entry name" value="LARGE RIBOSOMAL SUBUNIT PROTEIN BL17M"/>
    <property type="match status" value="1"/>
</dbReference>
<dbReference type="PANTHER" id="PTHR14413">
    <property type="entry name" value="RIBOSOMAL PROTEIN L17"/>
    <property type="match status" value="1"/>
</dbReference>
<dbReference type="Pfam" id="PF01196">
    <property type="entry name" value="Ribosomal_L17"/>
    <property type="match status" value="1"/>
</dbReference>
<dbReference type="SUPFAM" id="SSF64263">
    <property type="entry name" value="Prokaryotic ribosomal protein L17"/>
    <property type="match status" value="1"/>
</dbReference>
<dbReference type="PROSITE" id="PS01167">
    <property type="entry name" value="RIBOSOMAL_L17"/>
    <property type="match status" value="1"/>
</dbReference>
<gene>
    <name evidence="1" type="primary">rplQ</name>
    <name type="ordered locus">ETA_31370</name>
</gene>
<accession>B2VK70</accession>
<sequence>MRHRKSGRQLNRNSSHRQAMFRNMAGSLVRHEIIKTTLPKAKELRRVVEPLITLAKTDSVANRRLAFARTRDNEIVAKLFNELGPRFASRAGGYTRILKCGFRAGDNAPMAYIELVDRPEAQAEAVAE</sequence>